<dbReference type="EMBL" id="BX927241">
    <property type="protein sequence ID" value="CAK05330.1"/>
    <property type="molecule type" value="Genomic_DNA"/>
</dbReference>
<dbReference type="EMBL" id="BC124652">
    <property type="protein sequence ID" value="AAI24653.1"/>
    <property type="molecule type" value="mRNA"/>
</dbReference>
<dbReference type="RefSeq" id="NP_001070748.1">
    <property type="nucleotide sequence ID" value="NM_001077280.1"/>
</dbReference>
<dbReference type="FunCoup" id="Q1LUS5">
    <property type="interactions" value="1454"/>
</dbReference>
<dbReference type="STRING" id="7955.ENSDARP00000139413"/>
<dbReference type="PaxDb" id="7955-ENSDARP00000087698"/>
<dbReference type="Ensembl" id="ENSDART00000158677">
    <property type="protein sequence ID" value="ENSDARP00000139413"/>
    <property type="gene ID" value="ENSDARG00000077407"/>
</dbReference>
<dbReference type="GeneID" id="768134"/>
<dbReference type="KEGG" id="dre:768134"/>
<dbReference type="AGR" id="ZFIN:ZDB-GENE-060503-55"/>
<dbReference type="ZFIN" id="ZDB-GENE-060503-55">
    <property type="gene designation" value="si:dkey-184p18.2"/>
</dbReference>
<dbReference type="eggNOG" id="ENOG502S2A1">
    <property type="taxonomic scope" value="Eukaryota"/>
</dbReference>
<dbReference type="InParanoid" id="Q1LUS5"/>
<dbReference type="OMA" id="HKGVNRD"/>
<dbReference type="OrthoDB" id="10049098at2759"/>
<dbReference type="PhylomeDB" id="Q1LUS5"/>
<dbReference type="TreeFam" id="TF330815"/>
<dbReference type="PRO" id="PR:Q1LUS5"/>
<dbReference type="Proteomes" id="UP000000437">
    <property type="component" value="Chromosome 19"/>
</dbReference>
<dbReference type="Bgee" id="ENSDARG00000077407">
    <property type="expression patterns" value="Expressed in heart and 20 other cell types or tissues"/>
</dbReference>
<dbReference type="InterPro" id="IPR029779">
    <property type="entry name" value="DUF4674"/>
</dbReference>
<dbReference type="PANTHER" id="PTHR31402">
    <property type="entry name" value="UPF0711 PROTEIN C18ORF21"/>
    <property type="match status" value="1"/>
</dbReference>
<dbReference type="PANTHER" id="PTHR31402:SF2">
    <property type="entry name" value="UPF0711 PROTEIN C18ORF21"/>
    <property type="match status" value="1"/>
</dbReference>
<dbReference type="Pfam" id="PF15719">
    <property type="entry name" value="DUF4674"/>
    <property type="match status" value="1"/>
</dbReference>
<gene>
    <name type="ORF">si:dkey-184p18.2</name>
</gene>
<evidence type="ECO:0000256" key="1">
    <source>
        <dbReference type="SAM" id="MobiDB-lite"/>
    </source>
</evidence>
<evidence type="ECO:0000305" key="2"/>
<comment type="similarity">
    <text evidence="2">Belongs to the UPF0711 family.</text>
</comment>
<protein>
    <recommendedName>
        <fullName>UPF0711 protein C18orf21 homolog</fullName>
    </recommendedName>
</protein>
<proteinExistence type="evidence at transcript level"/>
<accession>Q1LUS5</accession>
<organism>
    <name type="scientific">Danio rerio</name>
    <name type="common">Zebrafish</name>
    <name type="synonym">Brachydanio rerio</name>
    <dbReference type="NCBI Taxonomy" id="7955"/>
    <lineage>
        <taxon>Eukaryota</taxon>
        <taxon>Metazoa</taxon>
        <taxon>Chordata</taxon>
        <taxon>Craniata</taxon>
        <taxon>Vertebrata</taxon>
        <taxon>Euteleostomi</taxon>
        <taxon>Actinopterygii</taxon>
        <taxon>Neopterygii</taxon>
        <taxon>Teleostei</taxon>
        <taxon>Ostariophysi</taxon>
        <taxon>Cypriniformes</taxon>
        <taxon>Danionidae</taxon>
        <taxon>Danioninae</taxon>
        <taxon>Danio</taxon>
    </lineage>
</organism>
<name>CR021_DANRE</name>
<sequence length="208" mass="23212">MTHNFLLKASLLYKDICPEQSRFLLQRHQSTAAALPQSIICPFCFEWRKLGNHHVRLRPKRKPTARIRRLLKRESAGKRLSAEQTAVLQKFKRASNAMMATCHTCNKVSRQPGMNRELLVSLSKHKSTPGSASKHRTPQTVNWATPKSVANRTPSSTPRSASSNTSSSSSSKSSSVKSSPFARLKKILMLENKQQGKKGGLKDFLSSL</sequence>
<keyword id="KW-1185">Reference proteome</keyword>
<reference key="1">
    <citation type="journal article" date="2013" name="Nature">
        <title>The zebrafish reference genome sequence and its relationship to the human genome.</title>
        <authorList>
            <person name="Howe K."/>
            <person name="Clark M.D."/>
            <person name="Torroja C.F."/>
            <person name="Torrance J."/>
            <person name="Berthelot C."/>
            <person name="Muffato M."/>
            <person name="Collins J.E."/>
            <person name="Humphray S."/>
            <person name="McLaren K."/>
            <person name="Matthews L."/>
            <person name="McLaren S."/>
            <person name="Sealy I."/>
            <person name="Caccamo M."/>
            <person name="Churcher C."/>
            <person name="Scott C."/>
            <person name="Barrett J.C."/>
            <person name="Koch R."/>
            <person name="Rauch G.J."/>
            <person name="White S."/>
            <person name="Chow W."/>
            <person name="Kilian B."/>
            <person name="Quintais L.T."/>
            <person name="Guerra-Assuncao J.A."/>
            <person name="Zhou Y."/>
            <person name="Gu Y."/>
            <person name="Yen J."/>
            <person name="Vogel J.H."/>
            <person name="Eyre T."/>
            <person name="Redmond S."/>
            <person name="Banerjee R."/>
            <person name="Chi J."/>
            <person name="Fu B."/>
            <person name="Langley E."/>
            <person name="Maguire S.F."/>
            <person name="Laird G.K."/>
            <person name="Lloyd D."/>
            <person name="Kenyon E."/>
            <person name="Donaldson S."/>
            <person name="Sehra H."/>
            <person name="Almeida-King J."/>
            <person name="Loveland J."/>
            <person name="Trevanion S."/>
            <person name="Jones M."/>
            <person name="Quail M."/>
            <person name="Willey D."/>
            <person name="Hunt A."/>
            <person name="Burton J."/>
            <person name="Sims S."/>
            <person name="McLay K."/>
            <person name="Plumb B."/>
            <person name="Davis J."/>
            <person name="Clee C."/>
            <person name="Oliver K."/>
            <person name="Clark R."/>
            <person name="Riddle C."/>
            <person name="Elliot D."/>
            <person name="Threadgold G."/>
            <person name="Harden G."/>
            <person name="Ware D."/>
            <person name="Begum S."/>
            <person name="Mortimore B."/>
            <person name="Kerry G."/>
            <person name="Heath P."/>
            <person name="Phillimore B."/>
            <person name="Tracey A."/>
            <person name="Corby N."/>
            <person name="Dunn M."/>
            <person name="Johnson C."/>
            <person name="Wood J."/>
            <person name="Clark S."/>
            <person name="Pelan S."/>
            <person name="Griffiths G."/>
            <person name="Smith M."/>
            <person name="Glithero R."/>
            <person name="Howden P."/>
            <person name="Barker N."/>
            <person name="Lloyd C."/>
            <person name="Stevens C."/>
            <person name="Harley J."/>
            <person name="Holt K."/>
            <person name="Panagiotidis G."/>
            <person name="Lovell J."/>
            <person name="Beasley H."/>
            <person name="Henderson C."/>
            <person name="Gordon D."/>
            <person name="Auger K."/>
            <person name="Wright D."/>
            <person name="Collins J."/>
            <person name="Raisen C."/>
            <person name="Dyer L."/>
            <person name="Leung K."/>
            <person name="Robertson L."/>
            <person name="Ambridge K."/>
            <person name="Leongamornlert D."/>
            <person name="McGuire S."/>
            <person name="Gilderthorp R."/>
            <person name="Griffiths C."/>
            <person name="Manthravadi D."/>
            <person name="Nichol S."/>
            <person name="Barker G."/>
            <person name="Whitehead S."/>
            <person name="Kay M."/>
            <person name="Brown J."/>
            <person name="Murnane C."/>
            <person name="Gray E."/>
            <person name="Humphries M."/>
            <person name="Sycamore N."/>
            <person name="Barker D."/>
            <person name="Saunders D."/>
            <person name="Wallis J."/>
            <person name="Babbage A."/>
            <person name="Hammond S."/>
            <person name="Mashreghi-Mohammadi M."/>
            <person name="Barr L."/>
            <person name="Martin S."/>
            <person name="Wray P."/>
            <person name="Ellington A."/>
            <person name="Matthews N."/>
            <person name="Ellwood M."/>
            <person name="Woodmansey R."/>
            <person name="Clark G."/>
            <person name="Cooper J."/>
            <person name="Tromans A."/>
            <person name="Grafham D."/>
            <person name="Skuce C."/>
            <person name="Pandian R."/>
            <person name="Andrews R."/>
            <person name="Harrison E."/>
            <person name="Kimberley A."/>
            <person name="Garnett J."/>
            <person name="Fosker N."/>
            <person name="Hall R."/>
            <person name="Garner P."/>
            <person name="Kelly D."/>
            <person name="Bird C."/>
            <person name="Palmer S."/>
            <person name="Gehring I."/>
            <person name="Berger A."/>
            <person name="Dooley C.M."/>
            <person name="Ersan-Urun Z."/>
            <person name="Eser C."/>
            <person name="Geiger H."/>
            <person name="Geisler M."/>
            <person name="Karotki L."/>
            <person name="Kirn A."/>
            <person name="Konantz J."/>
            <person name="Konantz M."/>
            <person name="Oberlander M."/>
            <person name="Rudolph-Geiger S."/>
            <person name="Teucke M."/>
            <person name="Lanz C."/>
            <person name="Raddatz G."/>
            <person name="Osoegawa K."/>
            <person name="Zhu B."/>
            <person name="Rapp A."/>
            <person name="Widaa S."/>
            <person name="Langford C."/>
            <person name="Yang F."/>
            <person name="Schuster S.C."/>
            <person name="Carter N.P."/>
            <person name="Harrow J."/>
            <person name="Ning Z."/>
            <person name="Herrero J."/>
            <person name="Searle S.M."/>
            <person name="Enright A."/>
            <person name="Geisler R."/>
            <person name="Plasterk R.H."/>
            <person name="Lee C."/>
            <person name="Westerfield M."/>
            <person name="de Jong P.J."/>
            <person name="Zon L.I."/>
            <person name="Postlethwait J.H."/>
            <person name="Nusslein-Volhard C."/>
            <person name="Hubbard T.J."/>
            <person name="Roest Crollius H."/>
            <person name="Rogers J."/>
            <person name="Stemple D.L."/>
        </authorList>
    </citation>
    <scope>NUCLEOTIDE SEQUENCE [LARGE SCALE GENOMIC DNA]</scope>
    <source>
        <strain>Tuebingen</strain>
    </source>
</reference>
<reference key="2">
    <citation type="submission" date="2006-10" db="EMBL/GenBank/DDBJ databases">
        <authorList>
            <consortium name="NIH - Zebrafish Gene Collection (ZGC) project"/>
        </authorList>
    </citation>
    <scope>NUCLEOTIDE SEQUENCE [LARGE SCALE MRNA]</scope>
    <source>
        <tissue>Embryo</tissue>
    </source>
</reference>
<feature type="chain" id="PRO_0000360424" description="UPF0711 protein C18orf21 homolog">
    <location>
        <begin position="1"/>
        <end position="208"/>
    </location>
</feature>
<feature type="region of interest" description="Disordered" evidence="1">
    <location>
        <begin position="123"/>
        <end position="180"/>
    </location>
</feature>
<feature type="region of interest" description="Disordered" evidence="1">
    <location>
        <begin position="189"/>
        <end position="208"/>
    </location>
</feature>
<feature type="compositionally biased region" description="Basic residues" evidence="1">
    <location>
        <begin position="123"/>
        <end position="137"/>
    </location>
</feature>
<feature type="compositionally biased region" description="Polar residues" evidence="1">
    <location>
        <begin position="138"/>
        <end position="152"/>
    </location>
</feature>
<feature type="compositionally biased region" description="Low complexity" evidence="1">
    <location>
        <begin position="153"/>
        <end position="180"/>
    </location>
</feature>